<organism>
    <name type="scientific">Rhizobium leguminosarum</name>
    <dbReference type="NCBI Taxonomy" id="384"/>
    <lineage>
        <taxon>Bacteria</taxon>
        <taxon>Pseudomonadati</taxon>
        <taxon>Pseudomonadota</taxon>
        <taxon>Alphaproteobacteria</taxon>
        <taxon>Hyphomicrobiales</taxon>
        <taxon>Rhizobiaceae</taxon>
        <taxon>Rhizobium/Agrobacterium group</taxon>
        <taxon>Rhizobium</taxon>
    </lineage>
</organism>
<name>YFX1_RHILE</name>
<dbReference type="EMBL" id="X16521">
    <property type="protein sequence ID" value="CAA34525.1"/>
    <property type="molecule type" value="Genomic_DNA"/>
</dbReference>
<dbReference type="PIR" id="JQ0311">
    <property type="entry name" value="JQ0311"/>
</dbReference>
<reference key="1">
    <citation type="journal article" date="1989" name="Mol. Gen. Genet.">
        <title>Characterization and nucleotide sequence of a novel gene fixW upstream of the fixABC operon in Rhizobium leguminosarum.</title>
        <authorList>
            <person name="Hontelez J.G.J."/>
            <person name="Lankhorst R.K."/>
            <person name="Katinakis P."/>
            <person name="van den Bos R.C."/>
            <person name="van Kammen A."/>
        </authorList>
    </citation>
    <scope>NUCLEOTIDE SEQUENCE [GENOMIC DNA]</scope>
</reference>
<accession>P14310</accession>
<evidence type="ECO:0000256" key="1">
    <source>
        <dbReference type="SAM" id="MobiDB-lite"/>
    </source>
</evidence>
<protein>
    <recommendedName>
        <fullName>Uncharacterized 7.9 kDa protein in fixW 5'region</fullName>
    </recommendedName>
</protein>
<sequence length="71" mass="7939">MHIVVCIKQFPGFGRLVSSSSGRRQLTATQPRSDPESQRGRTSSNRLTWRGALEWPRAASALDLGIFPSRR</sequence>
<feature type="chain" id="PRO_0000066220" description="Uncharacterized 7.9 kDa protein in fixW 5'region">
    <location>
        <begin position="1"/>
        <end position="71"/>
    </location>
</feature>
<feature type="region of interest" description="Disordered" evidence="1">
    <location>
        <begin position="20"/>
        <end position="46"/>
    </location>
</feature>
<feature type="compositionally biased region" description="Polar residues" evidence="1">
    <location>
        <begin position="20"/>
        <end position="32"/>
    </location>
</feature>
<proteinExistence type="predicted"/>